<organism>
    <name type="scientific">Aeromonas salmonicida (strain A449)</name>
    <dbReference type="NCBI Taxonomy" id="382245"/>
    <lineage>
        <taxon>Bacteria</taxon>
        <taxon>Pseudomonadati</taxon>
        <taxon>Pseudomonadota</taxon>
        <taxon>Gammaproteobacteria</taxon>
        <taxon>Aeromonadales</taxon>
        <taxon>Aeromonadaceae</taxon>
        <taxon>Aeromonas</taxon>
    </lineage>
</organism>
<feature type="chain" id="PRO_0000330489" description="Siroheme synthase 1">
    <location>
        <begin position="1"/>
        <end position="468"/>
    </location>
</feature>
<feature type="region of interest" description="Precorrin-2 dehydrogenase /sirohydrochlorin ferrochelatase" evidence="1">
    <location>
        <begin position="1"/>
        <end position="204"/>
    </location>
</feature>
<feature type="region of interest" description="Uroporphyrinogen-III C-methyltransferase" evidence="1">
    <location>
        <begin position="216"/>
        <end position="468"/>
    </location>
</feature>
<feature type="active site" description="Proton acceptor" evidence="1">
    <location>
        <position position="248"/>
    </location>
</feature>
<feature type="active site" description="Proton donor" evidence="1">
    <location>
        <position position="270"/>
    </location>
</feature>
<feature type="binding site" evidence="1">
    <location>
        <begin position="22"/>
        <end position="23"/>
    </location>
    <ligand>
        <name>NAD(+)</name>
        <dbReference type="ChEBI" id="CHEBI:57540"/>
    </ligand>
</feature>
<feature type="binding site" evidence="1">
    <location>
        <begin position="43"/>
        <end position="44"/>
    </location>
    <ligand>
        <name>NAD(+)</name>
        <dbReference type="ChEBI" id="CHEBI:57540"/>
    </ligand>
</feature>
<feature type="binding site" evidence="1">
    <location>
        <position position="225"/>
    </location>
    <ligand>
        <name>S-adenosyl-L-methionine</name>
        <dbReference type="ChEBI" id="CHEBI:59789"/>
    </ligand>
</feature>
<feature type="binding site" evidence="1">
    <location>
        <begin position="301"/>
        <end position="303"/>
    </location>
    <ligand>
        <name>S-adenosyl-L-methionine</name>
        <dbReference type="ChEBI" id="CHEBI:59789"/>
    </ligand>
</feature>
<feature type="binding site" evidence="1">
    <location>
        <position position="306"/>
    </location>
    <ligand>
        <name>S-adenosyl-L-methionine</name>
        <dbReference type="ChEBI" id="CHEBI:59789"/>
    </ligand>
</feature>
<feature type="binding site" evidence="1">
    <location>
        <begin position="331"/>
        <end position="332"/>
    </location>
    <ligand>
        <name>S-adenosyl-L-methionine</name>
        <dbReference type="ChEBI" id="CHEBI:59789"/>
    </ligand>
</feature>
<feature type="binding site" evidence="1">
    <location>
        <position position="383"/>
    </location>
    <ligand>
        <name>S-adenosyl-L-methionine</name>
        <dbReference type="ChEBI" id="CHEBI:59789"/>
    </ligand>
</feature>
<feature type="binding site" evidence="1">
    <location>
        <position position="412"/>
    </location>
    <ligand>
        <name>S-adenosyl-L-methionine</name>
        <dbReference type="ChEBI" id="CHEBI:59789"/>
    </ligand>
</feature>
<feature type="modified residue" description="Phosphoserine" evidence="1">
    <location>
        <position position="128"/>
    </location>
</feature>
<protein>
    <recommendedName>
        <fullName evidence="1">Siroheme synthase 1</fullName>
    </recommendedName>
    <domain>
        <recommendedName>
            <fullName evidence="1">Uroporphyrinogen-III C-methyltransferase 1</fullName>
            <shortName evidence="1">Urogen III methylase 1</shortName>
            <ecNumber evidence="1">2.1.1.107</ecNumber>
        </recommendedName>
        <alternativeName>
            <fullName evidence="1">SUMT 1</fullName>
        </alternativeName>
        <alternativeName>
            <fullName evidence="1">Uroporphyrinogen III methylase 1</fullName>
            <shortName evidence="1">UROM 1</shortName>
        </alternativeName>
    </domain>
    <domain>
        <recommendedName>
            <fullName evidence="1">Precorrin-2 dehydrogenase 1</fullName>
            <ecNumber evidence="1">1.3.1.76</ecNumber>
        </recommendedName>
    </domain>
    <domain>
        <recommendedName>
            <fullName evidence="1">Sirohydrochlorin ferrochelatase 1</fullName>
            <ecNumber evidence="1">4.99.1.4</ecNumber>
        </recommendedName>
    </domain>
</protein>
<gene>
    <name evidence="1" type="primary">cysG1</name>
    <name type="ordered locus">ASA_0192</name>
</gene>
<evidence type="ECO:0000255" key="1">
    <source>
        <dbReference type="HAMAP-Rule" id="MF_01646"/>
    </source>
</evidence>
<keyword id="KW-0169">Cobalamin biosynthesis</keyword>
<keyword id="KW-0456">Lyase</keyword>
<keyword id="KW-0489">Methyltransferase</keyword>
<keyword id="KW-0511">Multifunctional enzyme</keyword>
<keyword id="KW-0520">NAD</keyword>
<keyword id="KW-0560">Oxidoreductase</keyword>
<keyword id="KW-0597">Phosphoprotein</keyword>
<keyword id="KW-0627">Porphyrin biosynthesis</keyword>
<keyword id="KW-0949">S-adenosyl-L-methionine</keyword>
<keyword id="KW-0808">Transferase</keyword>
<accession>A4SHL4</accession>
<proteinExistence type="inferred from homology"/>
<comment type="function">
    <text evidence="1">Multifunctional enzyme that catalyzes the SAM-dependent methylations of uroporphyrinogen III at position C-2 and C-7 to form precorrin-2 via precorrin-1. Then it catalyzes the NAD-dependent ring dehydrogenation of precorrin-2 to yield sirohydrochlorin. Finally, it catalyzes the ferrochelation of sirohydrochlorin to yield siroheme.</text>
</comment>
<comment type="catalytic activity">
    <reaction evidence="1">
        <text>uroporphyrinogen III + 2 S-adenosyl-L-methionine = precorrin-2 + 2 S-adenosyl-L-homocysteine + H(+)</text>
        <dbReference type="Rhea" id="RHEA:32459"/>
        <dbReference type="ChEBI" id="CHEBI:15378"/>
        <dbReference type="ChEBI" id="CHEBI:57308"/>
        <dbReference type="ChEBI" id="CHEBI:57856"/>
        <dbReference type="ChEBI" id="CHEBI:58827"/>
        <dbReference type="ChEBI" id="CHEBI:59789"/>
        <dbReference type="EC" id="2.1.1.107"/>
    </reaction>
</comment>
<comment type="catalytic activity">
    <reaction evidence="1">
        <text>precorrin-2 + NAD(+) = sirohydrochlorin + NADH + 2 H(+)</text>
        <dbReference type="Rhea" id="RHEA:15613"/>
        <dbReference type="ChEBI" id="CHEBI:15378"/>
        <dbReference type="ChEBI" id="CHEBI:57540"/>
        <dbReference type="ChEBI" id="CHEBI:57945"/>
        <dbReference type="ChEBI" id="CHEBI:58351"/>
        <dbReference type="ChEBI" id="CHEBI:58827"/>
        <dbReference type="EC" id="1.3.1.76"/>
    </reaction>
</comment>
<comment type="catalytic activity">
    <reaction evidence="1">
        <text>siroheme + 2 H(+) = sirohydrochlorin + Fe(2+)</text>
        <dbReference type="Rhea" id="RHEA:24360"/>
        <dbReference type="ChEBI" id="CHEBI:15378"/>
        <dbReference type="ChEBI" id="CHEBI:29033"/>
        <dbReference type="ChEBI" id="CHEBI:58351"/>
        <dbReference type="ChEBI" id="CHEBI:60052"/>
        <dbReference type="EC" id="4.99.1.4"/>
    </reaction>
</comment>
<comment type="pathway">
    <text evidence="1">Cofactor biosynthesis; adenosylcobalamin biosynthesis; precorrin-2 from uroporphyrinogen III: step 1/1.</text>
</comment>
<comment type="pathway">
    <text evidence="1">Cofactor biosynthesis; adenosylcobalamin biosynthesis; sirohydrochlorin from precorrin-2: step 1/1.</text>
</comment>
<comment type="pathway">
    <text evidence="1">Porphyrin-containing compound metabolism; siroheme biosynthesis; precorrin-2 from uroporphyrinogen III: step 1/1.</text>
</comment>
<comment type="pathway">
    <text evidence="1">Porphyrin-containing compound metabolism; siroheme biosynthesis; siroheme from sirohydrochlorin: step 1/1.</text>
</comment>
<comment type="pathway">
    <text evidence="1">Porphyrin-containing compound metabolism; siroheme biosynthesis; sirohydrochlorin from precorrin-2: step 1/1.</text>
</comment>
<comment type="similarity">
    <text evidence="1">In the N-terminal section; belongs to the precorrin-2 dehydrogenase / sirohydrochlorin ferrochelatase family.</text>
</comment>
<comment type="similarity">
    <text evidence="1">In the C-terminal section; belongs to the precorrin methyltransferase family.</text>
</comment>
<dbReference type="EC" id="2.1.1.107" evidence="1"/>
<dbReference type="EC" id="1.3.1.76" evidence="1"/>
<dbReference type="EC" id="4.99.1.4" evidence="1"/>
<dbReference type="EMBL" id="CP000644">
    <property type="protein sequence ID" value="ABO88386.1"/>
    <property type="molecule type" value="Genomic_DNA"/>
</dbReference>
<dbReference type="SMR" id="A4SHL4"/>
<dbReference type="STRING" id="29491.GCA_000820065_01265"/>
<dbReference type="KEGG" id="asa:ASA_0192"/>
<dbReference type="eggNOG" id="COG0007">
    <property type="taxonomic scope" value="Bacteria"/>
</dbReference>
<dbReference type="eggNOG" id="COG1648">
    <property type="taxonomic scope" value="Bacteria"/>
</dbReference>
<dbReference type="HOGENOM" id="CLU_011276_2_0_6"/>
<dbReference type="UniPathway" id="UPA00148">
    <property type="reaction ID" value="UER00211"/>
</dbReference>
<dbReference type="UniPathway" id="UPA00148">
    <property type="reaction ID" value="UER00222"/>
</dbReference>
<dbReference type="UniPathway" id="UPA00262">
    <property type="reaction ID" value="UER00211"/>
</dbReference>
<dbReference type="UniPathway" id="UPA00262">
    <property type="reaction ID" value="UER00222"/>
</dbReference>
<dbReference type="UniPathway" id="UPA00262">
    <property type="reaction ID" value="UER00376"/>
</dbReference>
<dbReference type="Proteomes" id="UP000000225">
    <property type="component" value="Chromosome"/>
</dbReference>
<dbReference type="GO" id="GO:0051287">
    <property type="term" value="F:NAD binding"/>
    <property type="evidence" value="ECO:0007669"/>
    <property type="project" value="InterPro"/>
</dbReference>
<dbReference type="GO" id="GO:0043115">
    <property type="term" value="F:precorrin-2 dehydrogenase activity"/>
    <property type="evidence" value="ECO:0007669"/>
    <property type="project" value="UniProtKB-UniRule"/>
</dbReference>
<dbReference type="GO" id="GO:0051266">
    <property type="term" value="F:sirohydrochlorin ferrochelatase activity"/>
    <property type="evidence" value="ECO:0007669"/>
    <property type="project" value="UniProtKB-EC"/>
</dbReference>
<dbReference type="GO" id="GO:0004851">
    <property type="term" value="F:uroporphyrin-III C-methyltransferase activity"/>
    <property type="evidence" value="ECO:0007669"/>
    <property type="project" value="UniProtKB-UniRule"/>
</dbReference>
<dbReference type="GO" id="GO:0009236">
    <property type="term" value="P:cobalamin biosynthetic process"/>
    <property type="evidence" value="ECO:0007669"/>
    <property type="project" value="UniProtKB-UniRule"/>
</dbReference>
<dbReference type="GO" id="GO:0032259">
    <property type="term" value="P:methylation"/>
    <property type="evidence" value="ECO:0007669"/>
    <property type="project" value="UniProtKB-KW"/>
</dbReference>
<dbReference type="GO" id="GO:0019354">
    <property type="term" value="P:siroheme biosynthetic process"/>
    <property type="evidence" value="ECO:0007669"/>
    <property type="project" value="UniProtKB-UniRule"/>
</dbReference>
<dbReference type="CDD" id="cd11642">
    <property type="entry name" value="SUMT"/>
    <property type="match status" value="1"/>
</dbReference>
<dbReference type="FunFam" id="3.30.160.110:FF:000001">
    <property type="entry name" value="Siroheme synthase"/>
    <property type="match status" value="1"/>
</dbReference>
<dbReference type="FunFam" id="3.30.950.10:FF:000001">
    <property type="entry name" value="Siroheme synthase"/>
    <property type="match status" value="1"/>
</dbReference>
<dbReference type="FunFam" id="3.40.1010.10:FF:000001">
    <property type="entry name" value="Siroheme synthase"/>
    <property type="match status" value="1"/>
</dbReference>
<dbReference type="Gene3D" id="3.40.1010.10">
    <property type="entry name" value="Cobalt-precorrin-4 Transmethylase, Domain 1"/>
    <property type="match status" value="1"/>
</dbReference>
<dbReference type="Gene3D" id="3.30.950.10">
    <property type="entry name" value="Methyltransferase, Cobalt-precorrin-4 Transmethylase, Domain 2"/>
    <property type="match status" value="1"/>
</dbReference>
<dbReference type="Gene3D" id="3.40.50.720">
    <property type="entry name" value="NAD(P)-binding Rossmann-like Domain"/>
    <property type="match status" value="1"/>
</dbReference>
<dbReference type="Gene3D" id="1.10.8.210">
    <property type="entry name" value="Sirohaem synthase, dimerisation domain"/>
    <property type="match status" value="1"/>
</dbReference>
<dbReference type="Gene3D" id="3.30.160.110">
    <property type="entry name" value="Siroheme synthase, domain 2"/>
    <property type="match status" value="1"/>
</dbReference>
<dbReference type="HAMAP" id="MF_01646">
    <property type="entry name" value="Siroheme_synth"/>
    <property type="match status" value="1"/>
</dbReference>
<dbReference type="InterPro" id="IPR000878">
    <property type="entry name" value="4pyrrol_Mease"/>
</dbReference>
<dbReference type="InterPro" id="IPR035996">
    <property type="entry name" value="4pyrrol_Methylase_sf"/>
</dbReference>
<dbReference type="InterPro" id="IPR014777">
    <property type="entry name" value="4pyrrole_Mease_sub1"/>
</dbReference>
<dbReference type="InterPro" id="IPR014776">
    <property type="entry name" value="4pyrrole_Mease_sub2"/>
</dbReference>
<dbReference type="InterPro" id="IPR006366">
    <property type="entry name" value="CobA/CysG_C"/>
</dbReference>
<dbReference type="InterPro" id="IPR036291">
    <property type="entry name" value="NAD(P)-bd_dom_sf"/>
</dbReference>
<dbReference type="InterPro" id="IPR050161">
    <property type="entry name" value="Siro_Cobalamin_biosynth"/>
</dbReference>
<dbReference type="InterPro" id="IPR037115">
    <property type="entry name" value="Sirohaem_synt_dimer_dom_sf"/>
</dbReference>
<dbReference type="InterPro" id="IPR012409">
    <property type="entry name" value="Sirohaem_synth"/>
</dbReference>
<dbReference type="InterPro" id="IPR028281">
    <property type="entry name" value="Sirohaem_synthase_central"/>
</dbReference>
<dbReference type="InterPro" id="IPR019478">
    <property type="entry name" value="Sirohaem_synthase_dimer_dom"/>
</dbReference>
<dbReference type="InterPro" id="IPR006367">
    <property type="entry name" value="Sirohaem_synthase_N"/>
</dbReference>
<dbReference type="InterPro" id="IPR003043">
    <property type="entry name" value="Uropor_MeTrfase_CS"/>
</dbReference>
<dbReference type="NCBIfam" id="TIGR01469">
    <property type="entry name" value="cobA_cysG_Cterm"/>
    <property type="match status" value="1"/>
</dbReference>
<dbReference type="NCBIfam" id="TIGR01470">
    <property type="entry name" value="cysG_Nterm"/>
    <property type="match status" value="1"/>
</dbReference>
<dbReference type="NCBIfam" id="NF004790">
    <property type="entry name" value="PRK06136.1"/>
    <property type="match status" value="1"/>
</dbReference>
<dbReference type="NCBIfam" id="NF007922">
    <property type="entry name" value="PRK10637.1"/>
    <property type="match status" value="1"/>
</dbReference>
<dbReference type="PANTHER" id="PTHR45790:SF1">
    <property type="entry name" value="SIROHEME SYNTHASE"/>
    <property type="match status" value="1"/>
</dbReference>
<dbReference type="PANTHER" id="PTHR45790">
    <property type="entry name" value="SIROHEME SYNTHASE-RELATED"/>
    <property type="match status" value="1"/>
</dbReference>
<dbReference type="Pfam" id="PF10414">
    <property type="entry name" value="CysG_dimeriser"/>
    <property type="match status" value="1"/>
</dbReference>
<dbReference type="Pfam" id="PF13241">
    <property type="entry name" value="NAD_binding_7"/>
    <property type="match status" value="1"/>
</dbReference>
<dbReference type="Pfam" id="PF14824">
    <property type="entry name" value="Sirohm_synth_M"/>
    <property type="match status" value="1"/>
</dbReference>
<dbReference type="Pfam" id="PF00590">
    <property type="entry name" value="TP_methylase"/>
    <property type="match status" value="1"/>
</dbReference>
<dbReference type="PIRSF" id="PIRSF036426">
    <property type="entry name" value="Sirohaem_synth"/>
    <property type="match status" value="1"/>
</dbReference>
<dbReference type="SUPFAM" id="SSF51735">
    <property type="entry name" value="NAD(P)-binding Rossmann-fold domains"/>
    <property type="match status" value="1"/>
</dbReference>
<dbReference type="SUPFAM" id="SSF75615">
    <property type="entry name" value="Siroheme synthase middle domains-like"/>
    <property type="match status" value="1"/>
</dbReference>
<dbReference type="SUPFAM" id="SSF53790">
    <property type="entry name" value="Tetrapyrrole methylase"/>
    <property type="match status" value="1"/>
</dbReference>
<dbReference type="PROSITE" id="PS00839">
    <property type="entry name" value="SUMT_1"/>
    <property type="match status" value="1"/>
</dbReference>
<dbReference type="PROSITE" id="PS00840">
    <property type="entry name" value="SUMT_2"/>
    <property type="match status" value="1"/>
</dbReference>
<sequence>MDYLPIFCRLDNKPVLLVGGGEVAERKARLLLDAGARLTVVSPALDPELAALATSGTIDWLAAEFEPAHLTGKWLVVAATDRREVNALVYQSANQAGIFANVVDDPKRSSFIMPSIIDRSPLMVAISSGGKAPVLARLLREKLEALLPQHLGAVAAFAGGLRARVKARFASMGERRQFWERLLSADRLGQALARGDKASANQLADTLFAEETGAKGEVILVGAGPGDPGLLTLHALRHMQQADLVVYDQLVSDEVMALVRRDARRIFVGKQAGNHCVPQEGINQLLLEEASKGQRVVRLKGGDPFIFGRGGEELETLVGSGVGFQVVPGITAASGCAAYAGIPLTHRDHAQSVRFVTAHGKGGTQDLDWPLLARDQQTLVFYMGLSSCATIRQKLTAHGKAGTTPVALIERGTQLNQRVIRGTLDQLPELAVGVESPALIMVGSVVTLADKLAWFGQTNHGVQAAALA</sequence>
<name>CYSG1_AERS4</name>
<reference key="1">
    <citation type="journal article" date="2008" name="BMC Genomics">
        <title>The genome of Aeromonas salmonicida subsp. salmonicida A449: insights into the evolution of a fish pathogen.</title>
        <authorList>
            <person name="Reith M.E."/>
            <person name="Singh R.K."/>
            <person name="Curtis B."/>
            <person name="Boyd J.M."/>
            <person name="Bouevitch A."/>
            <person name="Kimball J."/>
            <person name="Munholland J."/>
            <person name="Murphy C."/>
            <person name="Sarty D."/>
            <person name="Williams J."/>
            <person name="Nash J.H."/>
            <person name="Johnson S.C."/>
            <person name="Brown L.L."/>
        </authorList>
    </citation>
    <scope>NUCLEOTIDE SEQUENCE [LARGE SCALE GENOMIC DNA]</scope>
    <source>
        <strain>A449</strain>
    </source>
</reference>